<evidence type="ECO:0000255" key="1">
    <source>
        <dbReference type="PROSITE-ProRule" id="PRU00433"/>
    </source>
</evidence>
<evidence type="ECO:0000305" key="2"/>
<comment type="function">
    <text>Electron carrier protein. The oxidized form of the cytochrome c heme group can accept an electron from the heme group of the cytochrome c1 subunit of cytochrome reductase. Cytochrome c then transfers this electron to the cytochrome oxidase complex, the final protein carrier in the mitochondrial electron-transport chain.</text>
</comment>
<comment type="subcellular location">
    <subcellularLocation>
        <location>Mitochondrion intermembrane space</location>
    </subcellularLocation>
    <text>Loosely associated with the inner membrane.</text>
</comment>
<comment type="PTM">
    <text>Binds 1 heme c group covalently per subunit.</text>
</comment>
<comment type="similarity">
    <text evidence="2">Belongs to the cytochrome c family.</text>
</comment>
<comment type="online information" name="Protein Spotlight">
    <link uri="https://www.proteinspotlight.org/back_issues/076"/>
    <text>Life shuttle - Issue 76 of November 2006</text>
</comment>
<feature type="chain" id="PRO_0000108311" description="Cytochrome c">
    <location>
        <begin position="1"/>
        <end position="108"/>
    </location>
</feature>
<feature type="binding site" description="covalent" evidence="1">
    <location>
        <position position="19"/>
    </location>
    <ligand>
        <name>heme c</name>
        <dbReference type="ChEBI" id="CHEBI:61717"/>
    </ligand>
</feature>
<feature type="binding site" description="covalent" evidence="1">
    <location>
        <position position="22"/>
    </location>
    <ligand>
        <name>heme c</name>
        <dbReference type="ChEBI" id="CHEBI:61717"/>
    </ligand>
</feature>
<feature type="binding site" description="axial binding residue" evidence="1">
    <location>
        <position position="23"/>
    </location>
    <ligand>
        <name>heme c</name>
        <dbReference type="ChEBI" id="CHEBI:61717"/>
    </ligand>
    <ligandPart>
        <name>Fe</name>
        <dbReference type="ChEBI" id="CHEBI:18248"/>
    </ligandPart>
</feature>
<feature type="binding site" description="axial binding residue" evidence="1">
    <location>
        <position position="85"/>
    </location>
    <ligand>
        <name>heme c</name>
        <dbReference type="ChEBI" id="CHEBI:61717"/>
    </ligand>
    <ligandPart>
        <name>Fe</name>
        <dbReference type="ChEBI" id="CHEBI:18248"/>
    </ligandPart>
</feature>
<reference key="1">
    <citation type="journal article" date="1994" name="Mol. Biol. Evol.">
        <title>Molecular cloning of a cDNA encoding cytochrome c of Stellaria longipes (Caryophyllaceae) -- and the evolutionary implications.</title>
        <authorList>
            <person name="Zhang X.-H."/>
            <person name="Chinnappa C.C."/>
        </authorList>
    </citation>
    <scope>NUCLEOTIDE SEQUENCE [MRNA]</scope>
    <source>
        <tissue>Leaf</tissue>
    </source>
</reference>
<dbReference type="EMBL" id="Z21499">
    <property type="protein sequence ID" value="CAA79708.1"/>
    <property type="molecule type" value="mRNA"/>
</dbReference>
<dbReference type="SMR" id="Q41346"/>
<dbReference type="GO" id="GO:0005758">
    <property type="term" value="C:mitochondrial intermembrane space"/>
    <property type="evidence" value="ECO:0007669"/>
    <property type="project" value="UniProtKB-SubCell"/>
</dbReference>
<dbReference type="GO" id="GO:0009055">
    <property type="term" value="F:electron transfer activity"/>
    <property type="evidence" value="ECO:0007669"/>
    <property type="project" value="InterPro"/>
</dbReference>
<dbReference type="GO" id="GO:0020037">
    <property type="term" value="F:heme binding"/>
    <property type="evidence" value="ECO:0007669"/>
    <property type="project" value="InterPro"/>
</dbReference>
<dbReference type="GO" id="GO:0046872">
    <property type="term" value="F:metal ion binding"/>
    <property type="evidence" value="ECO:0007669"/>
    <property type="project" value="UniProtKB-KW"/>
</dbReference>
<dbReference type="FunFam" id="1.10.760.10:FF:000001">
    <property type="entry name" value="Cytochrome c iso-1"/>
    <property type="match status" value="1"/>
</dbReference>
<dbReference type="Gene3D" id="1.10.760.10">
    <property type="entry name" value="Cytochrome c-like domain"/>
    <property type="match status" value="1"/>
</dbReference>
<dbReference type="InterPro" id="IPR009056">
    <property type="entry name" value="Cyt_c-like_dom"/>
</dbReference>
<dbReference type="InterPro" id="IPR036909">
    <property type="entry name" value="Cyt_c-like_dom_sf"/>
</dbReference>
<dbReference type="InterPro" id="IPR002327">
    <property type="entry name" value="Cyt_c_1A/1B"/>
</dbReference>
<dbReference type="PANTHER" id="PTHR11961">
    <property type="entry name" value="CYTOCHROME C"/>
    <property type="match status" value="1"/>
</dbReference>
<dbReference type="Pfam" id="PF00034">
    <property type="entry name" value="Cytochrom_C"/>
    <property type="match status" value="1"/>
</dbReference>
<dbReference type="PRINTS" id="PR00604">
    <property type="entry name" value="CYTCHRMECIAB"/>
</dbReference>
<dbReference type="SUPFAM" id="SSF46626">
    <property type="entry name" value="Cytochrome c"/>
    <property type="match status" value="1"/>
</dbReference>
<dbReference type="PROSITE" id="PS51007">
    <property type="entry name" value="CYTC"/>
    <property type="match status" value="1"/>
</dbReference>
<protein>
    <recommendedName>
        <fullName>Cytochrome c</fullName>
    </recommendedName>
</protein>
<keyword id="KW-0249">Electron transport</keyword>
<keyword id="KW-0349">Heme</keyword>
<keyword id="KW-0408">Iron</keyword>
<keyword id="KW-0479">Metal-binding</keyword>
<keyword id="KW-0496">Mitochondrion</keyword>
<keyword id="KW-0679">Respiratory chain</keyword>
<keyword id="KW-0813">Transport</keyword>
<organism>
    <name type="scientific">Stellaria longipes</name>
    <name type="common">Longstalk starwort</name>
    <name type="synonym">Alsine longipes</name>
    <dbReference type="NCBI Taxonomy" id="19744"/>
    <lineage>
        <taxon>Eukaryota</taxon>
        <taxon>Viridiplantae</taxon>
        <taxon>Streptophyta</taxon>
        <taxon>Embryophyta</taxon>
        <taxon>Tracheophyta</taxon>
        <taxon>Spermatophyta</taxon>
        <taxon>Magnoliopsida</taxon>
        <taxon>eudicotyledons</taxon>
        <taxon>Gunneridae</taxon>
        <taxon>Pentapetalae</taxon>
        <taxon>Caryophyllales</taxon>
        <taxon>Caryophyllaceae</taxon>
        <taxon>Alsineae</taxon>
        <taxon>Stellaria</taxon>
    </lineage>
</organism>
<sequence length="108" mass="11974">MGFKEGDAKKGANLFKTRCAQCHTLGEGEGNKIGPNLHGLFGRHTGSVEGFSYTDANKAKGIEWNKDTLFEYLENPKKYIPGTKMAFGGLKKDKDRNDLITFLQDSTK</sequence>
<name>CYC_STELP</name>
<proteinExistence type="inferred from homology"/>
<accession>Q41346</accession>